<reference evidence="5" key="1">
    <citation type="submission" date="2010-12" db="UniProtKB">
        <authorList>
            <person name="Hong M."/>
            <person name="Li Q."/>
            <person name="Wang S.H."/>
            <person name="Bo Q.Q."/>
            <person name="Ge X."/>
        </authorList>
    </citation>
    <scope>PROTEIN SEQUENCE</scope>
    <scope>FUNCTION</scope>
    <scope>ACTIVITY REGULATION</scope>
    <scope>BIOPHYSICOCHEMICAL PROPERTIES</scope>
    <scope>MASS SPECTROMETRY</scope>
</reference>
<comment type="function">
    <text evidence="4">Serine protease. Has fibrinolytic and fibrinogenolytic but no plasminogenolytic activity. Cleaves after Arg and Lys residues. Cleaves fibrinogen alpha chain, beta chain and gamma chain in that order.</text>
</comment>
<comment type="activity regulation">
    <text evidence="4">Inhibited by PMSF. Not inhibited by benzamidine, aprotinin, SBTI, EDTA, EGTA, 2-mercaptoethanol, iodoacetic acid or pepstatin A.</text>
</comment>
<comment type="biophysicochemical properties">
    <phDependence>
        <text evidence="4">Optimum pH is 10. Active from pH 7 to 11.</text>
    </phDependence>
    <temperatureDependence>
        <text evidence="4">Optimum temperature is 60 degrees Celsius. Active from 30 to 70 degrees Celsius.</text>
    </temperatureDependence>
</comment>
<comment type="mass spectrometry" mass="29248.75" method="MALDI" evidence="4"/>
<comment type="miscellaneous">
    <text>On the 2D-gel the determined pI of this protein is: 4.55, its MW is: 31 kDa.</text>
</comment>
<comment type="similarity">
    <text evidence="1">Belongs to the peptidase S8 family.</text>
</comment>
<comment type="caution">
    <text evidence="5">The order of the peptides shown is unknown.</text>
</comment>
<sequence length="32" mass="3453">ISGTSMSCPHVAGRAYVLDTSLRVYLLDTGLR</sequence>
<feature type="chain" id="PRO_0000405025" description="Fibrinolytic enzyme 2">
    <location>
        <begin position="1" status="less than"/>
        <end position="32" status="greater than"/>
    </location>
</feature>
<feature type="domain" description="Peptidase S8" evidence="2">
    <location>
        <begin position="1" status="less than"/>
        <end position="32" status="greater than"/>
    </location>
</feature>
<feature type="active site" description="Charge relay system" evidence="3">
    <location>
        <position position="5"/>
    </location>
</feature>
<feature type="non-consecutive residues" evidence="5">
    <location>
        <begin position="14"/>
        <end position="15"/>
    </location>
</feature>
<feature type="non-consecutive residues" evidence="5">
    <location>
        <begin position="23"/>
        <end position="24"/>
    </location>
</feature>
<feature type="non-terminal residue">
    <location>
        <position position="1"/>
    </location>
</feature>
<feature type="non-terminal residue">
    <location>
        <position position="32"/>
    </location>
</feature>
<protein>
    <recommendedName>
        <fullName>Fibrinolytic enzyme 2</fullName>
        <shortName>NJF-2</shortName>
        <ecNumber>3.4.21.-</ecNumber>
    </recommendedName>
</protein>
<name>FIBR2_HEDJA</name>
<keyword id="KW-0903">Direct protein sequencing</keyword>
<keyword id="KW-1206">Fibrinogenolytic toxin</keyword>
<keyword id="KW-1205">Fibrinolytic toxin</keyword>
<keyword id="KW-1199">Hemostasis impairing toxin</keyword>
<keyword id="KW-0378">Hydrolase</keyword>
<keyword id="KW-0645">Protease</keyword>
<keyword id="KW-0720">Serine protease</keyword>
<keyword id="KW-0800">Toxin</keyword>
<evidence type="ECO:0000255" key="1"/>
<evidence type="ECO:0000255" key="2">
    <source>
        <dbReference type="PROSITE-ProRule" id="PRU01240"/>
    </source>
</evidence>
<evidence type="ECO:0000255" key="3">
    <source>
        <dbReference type="PROSITE-ProRule" id="PRU10082"/>
    </source>
</evidence>
<evidence type="ECO:0000269" key="4">
    <source ref="1"/>
</evidence>
<evidence type="ECO:0000305" key="5"/>
<dbReference type="EC" id="3.4.21.-"/>
<dbReference type="SMR" id="P86876"/>
<dbReference type="GO" id="GO:0004252">
    <property type="term" value="F:serine-type endopeptidase activity"/>
    <property type="evidence" value="ECO:0007669"/>
    <property type="project" value="InterPro"/>
</dbReference>
<dbReference type="GO" id="GO:0090729">
    <property type="term" value="F:toxin activity"/>
    <property type="evidence" value="ECO:0007669"/>
    <property type="project" value="UniProtKB-KW"/>
</dbReference>
<dbReference type="GO" id="GO:0006508">
    <property type="term" value="P:proteolysis"/>
    <property type="evidence" value="ECO:0007669"/>
    <property type="project" value="UniProtKB-KW"/>
</dbReference>
<dbReference type="InterPro" id="IPR036852">
    <property type="entry name" value="Peptidase_S8/S53_dom_sf"/>
</dbReference>
<dbReference type="InterPro" id="IPR023828">
    <property type="entry name" value="Peptidase_S8_Ser-AS"/>
</dbReference>
<dbReference type="SUPFAM" id="SSF52743">
    <property type="entry name" value="Subtilisin-like"/>
    <property type="match status" value="1"/>
</dbReference>
<dbReference type="PROSITE" id="PS51892">
    <property type="entry name" value="SUBTILASE"/>
    <property type="match status" value="1"/>
</dbReference>
<dbReference type="PROSITE" id="PS00138">
    <property type="entry name" value="SUBTILASE_SER"/>
    <property type="match status" value="1"/>
</dbReference>
<proteinExistence type="evidence at protein level"/>
<accession>P86876</accession>
<organism>
    <name type="scientific">Hediste japonica</name>
    <name type="common">Polychaete worm</name>
    <name type="synonym">Neanthes japonica</name>
    <dbReference type="NCBI Taxonomy" id="73376"/>
    <lineage>
        <taxon>Eukaryota</taxon>
        <taxon>Metazoa</taxon>
        <taxon>Spiralia</taxon>
        <taxon>Lophotrochozoa</taxon>
        <taxon>Annelida</taxon>
        <taxon>Polychaeta</taxon>
        <taxon>Errantia</taxon>
        <taxon>Phyllodocida</taxon>
        <taxon>Nereididae</taxon>
        <taxon>Hediste</taxon>
    </lineage>
</organism>